<reference key="1">
    <citation type="journal article" date="1990" name="Mol. Gen. Genet.">
        <title>DNA sequence analysis of the recA genes from Proteus vulgaris, Erwinia carotovora, Shigella flexneri and Escherichia coli B/r.</title>
        <authorList>
            <person name="Zhao X.J."/>
            <person name="McEntee K."/>
        </authorList>
    </citation>
    <scope>NUCLEOTIDE SEQUENCE [GENOMIC DNA]</scope>
</reference>
<gene>
    <name evidence="1" type="primary">recA</name>
</gene>
<feature type="chain" id="PRO_0000122714" description="Protein RecA">
    <location>
        <begin position="1"/>
        <end position="342"/>
    </location>
</feature>
<sequence length="342" mass="36988">MAIDENKQKALAAALGQIEKQFGKGSIMRLGEDRSMNVETISTGSLSLDVALGAGGLPRGRIVEIYGPESYGKTTLTLQVIAAAQREGKICAFIDAEHALDPIYAQKLGVDIDNLLCSQPDTGEQALEICDALSRSGAVDVIVVDSVAALTPKAEIEGEIGDSHVGLAARMMSQAMRKLAGNLKNSNTLLIFINQIRMKIGVMFGNPETTTGGNALKFYASVRLDIRRIGSVKNGDEVVGSETRVKVVKNKIAAPFKQAEFQIMYGEGINTFGELIDLGVKHKLVEKAGAWYSYNGEKIGQGKANATTYLKEHPEMYNELNTKLREMLLNHAGEFTSARDFC</sequence>
<organism>
    <name type="scientific">Pectobacterium carotovorum</name>
    <name type="common">Erwinia carotovora</name>
    <dbReference type="NCBI Taxonomy" id="554"/>
    <lineage>
        <taxon>Bacteria</taxon>
        <taxon>Pseudomonadati</taxon>
        <taxon>Pseudomonadota</taxon>
        <taxon>Gammaproteobacteria</taxon>
        <taxon>Enterobacterales</taxon>
        <taxon>Pectobacteriaceae</taxon>
        <taxon>Pectobacterium</taxon>
    </lineage>
</organism>
<protein>
    <recommendedName>
        <fullName evidence="1">Protein RecA</fullName>
    </recommendedName>
    <alternativeName>
        <fullName evidence="1">Recombinase A</fullName>
    </alternativeName>
</protein>
<proteinExistence type="inferred from homology"/>
<comment type="function">
    <text evidence="1">Can catalyze the hydrolysis of ATP in the presence of single-stranded DNA, the ATP-dependent uptake of single-stranded DNA by duplex DNA, and the ATP-dependent hybridization of homologous single-stranded DNAs. It interacts with LexA causing its activation and leading to its autocatalytic cleavage.</text>
</comment>
<comment type="subcellular location">
    <subcellularLocation>
        <location evidence="1">Cytoplasm</location>
    </subcellularLocation>
</comment>
<comment type="similarity">
    <text evidence="1">Belongs to the RecA family.</text>
</comment>
<evidence type="ECO:0000255" key="1">
    <source>
        <dbReference type="HAMAP-Rule" id="MF_00268"/>
    </source>
</evidence>
<keyword id="KW-0067">ATP-binding</keyword>
<keyword id="KW-0963">Cytoplasm</keyword>
<keyword id="KW-0227">DNA damage</keyword>
<keyword id="KW-0233">DNA recombination</keyword>
<keyword id="KW-0234">DNA repair</keyword>
<keyword id="KW-0238">DNA-binding</keyword>
<keyword id="KW-0547">Nucleotide-binding</keyword>
<keyword id="KW-0742">SOS response</keyword>
<dbReference type="EMBL" id="X55554">
    <property type="protein sequence ID" value="CAB56783.1"/>
    <property type="molecule type" value="Genomic_DNA"/>
</dbReference>
<dbReference type="SMR" id="P26344"/>
<dbReference type="GO" id="GO:0005829">
    <property type="term" value="C:cytosol"/>
    <property type="evidence" value="ECO:0007669"/>
    <property type="project" value="TreeGrafter"/>
</dbReference>
<dbReference type="GO" id="GO:0005524">
    <property type="term" value="F:ATP binding"/>
    <property type="evidence" value="ECO:0007669"/>
    <property type="project" value="UniProtKB-UniRule"/>
</dbReference>
<dbReference type="GO" id="GO:0016887">
    <property type="term" value="F:ATP hydrolysis activity"/>
    <property type="evidence" value="ECO:0007669"/>
    <property type="project" value="InterPro"/>
</dbReference>
<dbReference type="GO" id="GO:0140664">
    <property type="term" value="F:ATP-dependent DNA damage sensor activity"/>
    <property type="evidence" value="ECO:0007669"/>
    <property type="project" value="InterPro"/>
</dbReference>
<dbReference type="GO" id="GO:0003684">
    <property type="term" value="F:damaged DNA binding"/>
    <property type="evidence" value="ECO:0007669"/>
    <property type="project" value="UniProtKB-UniRule"/>
</dbReference>
<dbReference type="GO" id="GO:0003697">
    <property type="term" value="F:single-stranded DNA binding"/>
    <property type="evidence" value="ECO:0007669"/>
    <property type="project" value="UniProtKB-UniRule"/>
</dbReference>
<dbReference type="GO" id="GO:0006310">
    <property type="term" value="P:DNA recombination"/>
    <property type="evidence" value="ECO:0007669"/>
    <property type="project" value="UniProtKB-UniRule"/>
</dbReference>
<dbReference type="GO" id="GO:0006281">
    <property type="term" value="P:DNA repair"/>
    <property type="evidence" value="ECO:0007669"/>
    <property type="project" value="UniProtKB-UniRule"/>
</dbReference>
<dbReference type="GO" id="GO:0009432">
    <property type="term" value="P:SOS response"/>
    <property type="evidence" value="ECO:0007669"/>
    <property type="project" value="UniProtKB-UniRule"/>
</dbReference>
<dbReference type="CDD" id="cd00983">
    <property type="entry name" value="RecA"/>
    <property type="match status" value="1"/>
</dbReference>
<dbReference type="FunFam" id="3.40.50.300:FF:000087">
    <property type="entry name" value="Recombinase RecA"/>
    <property type="match status" value="1"/>
</dbReference>
<dbReference type="Gene3D" id="3.40.50.300">
    <property type="entry name" value="P-loop containing nucleotide triphosphate hydrolases"/>
    <property type="match status" value="1"/>
</dbReference>
<dbReference type="HAMAP" id="MF_00268">
    <property type="entry name" value="RecA"/>
    <property type="match status" value="1"/>
</dbReference>
<dbReference type="InterPro" id="IPR003593">
    <property type="entry name" value="AAA+_ATPase"/>
</dbReference>
<dbReference type="InterPro" id="IPR013765">
    <property type="entry name" value="DNA_recomb/repair_RecA"/>
</dbReference>
<dbReference type="InterPro" id="IPR020584">
    <property type="entry name" value="DNA_recomb/repair_RecA_CS"/>
</dbReference>
<dbReference type="InterPro" id="IPR027417">
    <property type="entry name" value="P-loop_NTPase"/>
</dbReference>
<dbReference type="InterPro" id="IPR049261">
    <property type="entry name" value="RecA-like_C"/>
</dbReference>
<dbReference type="InterPro" id="IPR049428">
    <property type="entry name" value="RecA-like_N"/>
</dbReference>
<dbReference type="InterPro" id="IPR020588">
    <property type="entry name" value="RecA_ATP-bd"/>
</dbReference>
<dbReference type="InterPro" id="IPR023400">
    <property type="entry name" value="RecA_C_sf"/>
</dbReference>
<dbReference type="InterPro" id="IPR020587">
    <property type="entry name" value="RecA_monomer-monomer_interface"/>
</dbReference>
<dbReference type="NCBIfam" id="TIGR02012">
    <property type="entry name" value="tigrfam_recA"/>
    <property type="match status" value="1"/>
</dbReference>
<dbReference type="PANTHER" id="PTHR45900:SF1">
    <property type="entry name" value="MITOCHONDRIAL DNA REPAIR PROTEIN RECA HOMOLOG-RELATED"/>
    <property type="match status" value="1"/>
</dbReference>
<dbReference type="PANTHER" id="PTHR45900">
    <property type="entry name" value="RECA"/>
    <property type="match status" value="1"/>
</dbReference>
<dbReference type="Pfam" id="PF00154">
    <property type="entry name" value="RecA"/>
    <property type="match status" value="1"/>
</dbReference>
<dbReference type="Pfam" id="PF21096">
    <property type="entry name" value="RecA_C"/>
    <property type="match status" value="1"/>
</dbReference>
<dbReference type="PRINTS" id="PR00142">
    <property type="entry name" value="RECA"/>
</dbReference>
<dbReference type="SMART" id="SM00382">
    <property type="entry name" value="AAA"/>
    <property type="match status" value="1"/>
</dbReference>
<dbReference type="SUPFAM" id="SSF52540">
    <property type="entry name" value="P-loop containing nucleoside triphosphate hydrolases"/>
    <property type="match status" value="1"/>
</dbReference>
<dbReference type="SUPFAM" id="SSF54752">
    <property type="entry name" value="RecA protein, C-terminal domain"/>
    <property type="match status" value="1"/>
</dbReference>
<dbReference type="PROSITE" id="PS00321">
    <property type="entry name" value="RECA_1"/>
    <property type="match status" value="1"/>
</dbReference>
<dbReference type="PROSITE" id="PS50162">
    <property type="entry name" value="RECA_2"/>
    <property type="match status" value="1"/>
</dbReference>
<dbReference type="PROSITE" id="PS50163">
    <property type="entry name" value="RECA_3"/>
    <property type="match status" value="1"/>
</dbReference>
<name>RECA_PECCA</name>
<accession>P26344</accession>